<protein>
    <recommendedName>
        <fullName>Polyadenylate-binding protein, cytoplasmic and nuclear</fullName>
        <shortName>PABP</shortName>
        <shortName>Poly(A)-binding protein</shortName>
    </recommendedName>
    <alternativeName>
        <fullName>Polyadenylate tail-binding protein</fullName>
    </alternativeName>
</protein>
<evidence type="ECO:0000250" key="1"/>
<evidence type="ECO:0000255" key="2">
    <source>
        <dbReference type="PROSITE-ProRule" id="PRU00176"/>
    </source>
</evidence>
<evidence type="ECO:0000255" key="3">
    <source>
        <dbReference type="PROSITE-ProRule" id="PRU00641"/>
    </source>
</evidence>
<evidence type="ECO:0000256" key="4">
    <source>
        <dbReference type="SAM" id="MobiDB-lite"/>
    </source>
</evidence>
<evidence type="ECO:0000305" key="5"/>
<feature type="chain" id="PRO_0000295383" description="Polyadenylate-binding protein, cytoplasmic and nuclear">
    <location>
        <begin position="1"/>
        <end position="753"/>
    </location>
</feature>
<feature type="domain" description="RRM 1" evidence="2">
    <location>
        <begin position="48"/>
        <end position="126"/>
    </location>
</feature>
<feature type="domain" description="RRM 2" evidence="2">
    <location>
        <begin position="136"/>
        <end position="213"/>
    </location>
</feature>
<feature type="domain" description="RRM 3" evidence="2">
    <location>
        <begin position="229"/>
        <end position="306"/>
    </location>
</feature>
<feature type="domain" description="RRM 4" evidence="2">
    <location>
        <begin position="332"/>
        <end position="460"/>
    </location>
</feature>
<feature type="domain" description="PABC" evidence="3">
    <location>
        <begin position="647"/>
        <end position="724"/>
    </location>
</feature>
<feature type="region of interest" description="Disordered" evidence="4">
    <location>
        <begin position="1"/>
        <end position="49"/>
    </location>
</feature>
<feature type="region of interest" description="Disordered" evidence="4">
    <location>
        <begin position="363"/>
        <end position="417"/>
    </location>
</feature>
<feature type="region of interest" description="Disordered" evidence="4">
    <location>
        <begin position="607"/>
        <end position="649"/>
    </location>
</feature>
<feature type="region of interest" description="Disordered" evidence="4">
    <location>
        <begin position="727"/>
        <end position="753"/>
    </location>
</feature>
<feature type="compositionally biased region" description="Low complexity" evidence="4">
    <location>
        <begin position="1"/>
        <end position="43"/>
    </location>
</feature>
<feature type="compositionally biased region" description="Basic and acidic residues" evidence="4">
    <location>
        <begin position="376"/>
        <end position="417"/>
    </location>
</feature>
<feature type="compositionally biased region" description="Gly residues" evidence="4">
    <location>
        <begin position="607"/>
        <end position="619"/>
    </location>
</feature>
<feature type="compositionally biased region" description="Low complexity" evidence="4">
    <location>
        <begin position="633"/>
        <end position="649"/>
    </location>
</feature>
<feature type="compositionally biased region" description="Basic and acidic residues" evidence="4">
    <location>
        <begin position="737"/>
        <end position="753"/>
    </location>
</feature>
<dbReference type="EMBL" id="CH476598">
    <property type="protein sequence ID" value="EAU35591.1"/>
    <property type="molecule type" value="Genomic_DNA"/>
</dbReference>
<dbReference type="RefSeq" id="XP_001212967.1">
    <property type="nucleotide sequence ID" value="XM_001212967.1"/>
</dbReference>
<dbReference type="SMR" id="Q0CR95"/>
<dbReference type="STRING" id="341663.Q0CR95"/>
<dbReference type="EnsemblFungi" id="EAU35591">
    <property type="protein sequence ID" value="EAU35591"/>
    <property type="gene ID" value="ATEG_03789"/>
</dbReference>
<dbReference type="GeneID" id="4318615"/>
<dbReference type="VEuPathDB" id="FungiDB:ATEG_03789"/>
<dbReference type="eggNOG" id="KOG0123">
    <property type="taxonomic scope" value="Eukaryota"/>
</dbReference>
<dbReference type="HOGENOM" id="CLU_012062_22_4_1"/>
<dbReference type="OMA" id="QQPGFMP"/>
<dbReference type="OrthoDB" id="19742at2759"/>
<dbReference type="Proteomes" id="UP000007963">
    <property type="component" value="Unassembled WGS sequence"/>
</dbReference>
<dbReference type="GO" id="GO:0005737">
    <property type="term" value="C:cytoplasm"/>
    <property type="evidence" value="ECO:0007669"/>
    <property type="project" value="UniProtKB-SubCell"/>
</dbReference>
<dbReference type="GO" id="GO:0005634">
    <property type="term" value="C:nucleus"/>
    <property type="evidence" value="ECO:0007669"/>
    <property type="project" value="UniProtKB-SubCell"/>
</dbReference>
<dbReference type="GO" id="GO:0003723">
    <property type="term" value="F:RNA binding"/>
    <property type="evidence" value="ECO:0007669"/>
    <property type="project" value="UniProtKB-KW"/>
</dbReference>
<dbReference type="GO" id="GO:0006397">
    <property type="term" value="P:mRNA processing"/>
    <property type="evidence" value="ECO:0007669"/>
    <property type="project" value="UniProtKB-KW"/>
</dbReference>
<dbReference type="GO" id="GO:0051028">
    <property type="term" value="P:mRNA transport"/>
    <property type="evidence" value="ECO:0007669"/>
    <property type="project" value="UniProtKB-KW"/>
</dbReference>
<dbReference type="GO" id="GO:0006417">
    <property type="term" value="P:regulation of translation"/>
    <property type="evidence" value="ECO:0007669"/>
    <property type="project" value="UniProtKB-KW"/>
</dbReference>
<dbReference type="CDD" id="cd12378">
    <property type="entry name" value="RRM1_I_PABPs"/>
    <property type="match status" value="1"/>
</dbReference>
<dbReference type="CDD" id="cd12379">
    <property type="entry name" value="RRM2_I_PABPs"/>
    <property type="match status" value="1"/>
</dbReference>
<dbReference type="CDD" id="cd12380">
    <property type="entry name" value="RRM3_I_PABPs"/>
    <property type="match status" value="1"/>
</dbReference>
<dbReference type="CDD" id="cd12381">
    <property type="entry name" value="RRM4_I_PABPs"/>
    <property type="match status" value="1"/>
</dbReference>
<dbReference type="FunFam" id="1.10.1900.10:FF:000004">
    <property type="entry name" value="Polyadenylate-binding protein"/>
    <property type="match status" value="1"/>
</dbReference>
<dbReference type="FunFam" id="3.30.70.330:FF:000003">
    <property type="entry name" value="Polyadenylate-binding protein"/>
    <property type="match status" value="1"/>
</dbReference>
<dbReference type="FunFam" id="3.30.70.330:FF:000355">
    <property type="entry name" value="Polyadenylate-binding protein"/>
    <property type="match status" value="1"/>
</dbReference>
<dbReference type="FunFam" id="3.30.70.330:FF:000384">
    <property type="entry name" value="Polyadenylate-binding protein"/>
    <property type="match status" value="1"/>
</dbReference>
<dbReference type="Gene3D" id="3.30.70.330">
    <property type="match status" value="4"/>
</dbReference>
<dbReference type="Gene3D" id="1.10.1900.10">
    <property type="entry name" value="c-terminal domain of poly(a) binding protein"/>
    <property type="match status" value="1"/>
</dbReference>
<dbReference type="InterPro" id="IPR012677">
    <property type="entry name" value="Nucleotide-bd_a/b_plait_sf"/>
</dbReference>
<dbReference type="InterPro" id="IPR036053">
    <property type="entry name" value="PABP-dom"/>
</dbReference>
<dbReference type="InterPro" id="IPR006515">
    <property type="entry name" value="PABP_1234"/>
</dbReference>
<dbReference type="InterPro" id="IPR002004">
    <property type="entry name" value="PABP_HYD_C"/>
</dbReference>
<dbReference type="InterPro" id="IPR034364">
    <property type="entry name" value="PABP_RRM1"/>
</dbReference>
<dbReference type="InterPro" id="IPR035979">
    <property type="entry name" value="RBD_domain_sf"/>
</dbReference>
<dbReference type="InterPro" id="IPR045305">
    <property type="entry name" value="RRM2_I_PABPs"/>
</dbReference>
<dbReference type="InterPro" id="IPR000504">
    <property type="entry name" value="RRM_dom"/>
</dbReference>
<dbReference type="InterPro" id="IPR003954">
    <property type="entry name" value="RRM_dom_euk"/>
</dbReference>
<dbReference type="NCBIfam" id="TIGR01628">
    <property type="entry name" value="PABP-1234"/>
    <property type="match status" value="1"/>
</dbReference>
<dbReference type="PANTHER" id="PTHR24012">
    <property type="entry name" value="RNA BINDING PROTEIN"/>
    <property type="match status" value="1"/>
</dbReference>
<dbReference type="Pfam" id="PF00658">
    <property type="entry name" value="MLLE"/>
    <property type="match status" value="1"/>
</dbReference>
<dbReference type="Pfam" id="PF00076">
    <property type="entry name" value="RRM_1"/>
    <property type="match status" value="5"/>
</dbReference>
<dbReference type="SMART" id="SM00517">
    <property type="entry name" value="PolyA"/>
    <property type="match status" value="1"/>
</dbReference>
<dbReference type="SMART" id="SM00360">
    <property type="entry name" value="RRM"/>
    <property type="match status" value="4"/>
</dbReference>
<dbReference type="SMART" id="SM00361">
    <property type="entry name" value="RRM_1"/>
    <property type="match status" value="3"/>
</dbReference>
<dbReference type="SUPFAM" id="SSF63570">
    <property type="entry name" value="PABC (PABP) domain"/>
    <property type="match status" value="1"/>
</dbReference>
<dbReference type="SUPFAM" id="SSF54928">
    <property type="entry name" value="RNA-binding domain, RBD"/>
    <property type="match status" value="3"/>
</dbReference>
<dbReference type="PROSITE" id="PS51309">
    <property type="entry name" value="PABC"/>
    <property type="match status" value="1"/>
</dbReference>
<dbReference type="PROSITE" id="PS50102">
    <property type="entry name" value="RRM"/>
    <property type="match status" value="4"/>
</dbReference>
<organism>
    <name type="scientific">Aspergillus terreus (strain NIH 2624 / FGSC A1156)</name>
    <dbReference type="NCBI Taxonomy" id="341663"/>
    <lineage>
        <taxon>Eukaryota</taxon>
        <taxon>Fungi</taxon>
        <taxon>Dikarya</taxon>
        <taxon>Ascomycota</taxon>
        <taxon>Pezizomycotina</taxon>
        <taxon>Eurotiomycetes</taxon>
        <taxon>Eurotiomycetidae</taxon>
        <taxon>Eurotiales</taxon>
        <taxon>Aspergillaceae</taxon>
        <taxon>Aspergillus</taxon>
        <taxon>Aspergillus subgen. Circumdati</taxon>
    </lineage>
</organism>
<name>PABP_ASPTN</name>
<comment type="function">
    <text evidence="1">Binds the poly(A) tail of mRNA. Appears to be an important mediator of the multiple roles of the poly(A) tail in mRNA biogenesis, stability and translation. In the nucleus, involved in both mRNA cleavage and polyadenylation. Is also required for efficient mRNA export to the cytoplasm. Acts in concert with a poly(A)-specific nuclease (PAN) to affect poly(A) tail shortening, which may occur concomitantly with either nucleocytoplasmic mRNA transport or translational initiation. In the cytoplasm, stimulates translation initiation and regulates mRNA decay through translation termination-coupled poly(A) shortening, probably mediated by PAN (By similarity).</text>
</comment>
<comment type="subcellular location">
    <subcellularLocation>
        <location evidence="1">Cytoplasm</location>
    </subcellularLocation>
    <subcellularLocation>
        <location evidence="1">Nucleus</location>
    </subcellularLocation>
</comment>
<comment type="similarity">
    <text evidence="5">Belongs to the polyadenylate-binding protein type-1 family.</text>
</comment>
<accession>Q0CR95</accession>
<sequence length="753" mass="81419">MSAEASTTPAAETPVNGTPETSTTPAAPAAEATAAETAAPSTSQPHSASLYVGELDPSVTEAMLYELFSSIGQVASIRVCRDAVTRRSLGYAYVNYNNTADGERALEDLNYTLIKGKPCRIMWSQRDPALRKTGQGNVFIKNLDAAIDNKALHDTFAAFGNILSCKVAQDEFGNSKGYGFVHYETAEAANNAIKHVNGMLLNDKKVFVGHHISKKDRQSKFEEMKANFTNVYIKNLDQEISEEEFRQMFEKFGEITSATLSRDQEGKSRGFGFVNYSTHDSAQAAVDEMNDKEVKGQKLYVGRAQKKHEREEELRKQYEAARLEKASKYQGVNLYVKNLTDDIDDEKLREMFAPYGTITSAKVMRDTNIERTQTPDSDKEKKEESKEEKPEAAEKTEEAAKESGDDQDKENKKSDKKVLGKSKGFGFVCFSSPDEASKAVTEMNQRMINGKPLYVALAQRKDVRRSQLEASIQARNTIRQQQAAAAAGMPQPYMQPAVFYGPGQQGFIPGGQRGGLPFAPQPGMMMGVPGGRPGQYPGPFPGQQGGRGMGPNQQIPPNFAQGIPMGAMGPGGIPNGMGYPQMGQVQFGRGAGGRGQVPGMPMGQGMRGPGYGQGRGGVPVQGQMRPGQGGRGQNAQPAAGRGEEAPAAGLTAQSLAAAPAPQQKQMLGEALYPKIQAQQPELAGKITGMLLEMDNTELLSLLEDDEALRAKVDEALSVYDEYMKNKGTEGEAAGEAPKPKEAATEESTEENKS</sequence>
<keyword id="KW-0963">Cytoplasm</keyword>
<keyword id="KW-0507">mRNA processing</keyword>
<keyword id="KW-0509">mRNA transport</keyword>
<keyword id="KW-0539">Nucleus</keyword>
<keyword id="KW-1185">Reference proteome</keyword>
<keyword id="KW-0677">Repeat</keyword>
<keyword id="KW-0694">RNA-binding</keyword>
<keyword id="KW-0810">Translation regulation</keyword>
<keyword id="KW-0813">Transport</keyword>
<reference key="1">
    <citation type="submission" date="2005-09" db="EMBL/GenBank/DDBJ databases">
        <title>Annotation of the Aspergillus terreus NIH2624 genome.</title>
        <authorList>
            <person name="Birren B.W."/>
            <person name="Lander E.S."/>
            <person name="Galagan J.E."/>
            <person name="Nusbaum C."/>
            <person name="Devon K."/>
            <person name="Henn M."/>
            <person name="Ma L.-J."/>
            <person name="Jaffe D.B."/>
            <person name="Butler J."/>
            <person name="Alvarez P."/>
            <person name="Gnerre S."/>
            <person name="Grabherr M."/>
            <person name="Kleber M."/>
            <person name="Mauceli E.W."/>
            <person name="Brockman W."/>
            <person name="Rounsley S."/>
            <person name="Young S.K."/>
            <person name="LaButti K."/>
            <person name="Pushparaj V."/>
            <person name="DeCaprio D."/>
            <person name="Crawford M."/>
            <person name="Koehrsen M."/>
            <person name="Engels R."/>
            <person name="Montgomery P."/>
            <person name="Pearson M."/>
            <person name="Howarth C."/>
            <person name="Larson L."/>
            <person name="Luoma S."/>
            <person name="White J."/>
            <person name="Alvarado L."/>
            <person name="Kodira C.D."/>
            <person name="Zeng Q."/>
            <person name="Oleary S."/>
            <person name="Yandava C."/>
            <person name="Denning D.W."/>
            <person name="Nierman W.C."/>
            <person name="Milne T."/>
            <person name="Madden K."/>
        </authorList>
    </citation>
    <scope>NUCLEOTIDE SEQUENCE [LARGE SCALE GENOMIC DNA]</scope>
    <source>
        <strain>NIH 2624 / FGSC A1156</strain>
    </source>
</reference>
<gene>
    <name type="primary">pab1</name>
    <name type="ORF">ATEG_03789</name>
</gene>
<proteinExistence type="inferred from homology"/>